<name>FABZ_SYNE7</name>
<feature type="chain" id="PRO_0000242907" description="3-hydroxyacyl-[acyl-carrier-protein] dehydratase FabZ">
    <location>
        <begin position="1"/>
        <end position="155"/>
    </location>
</feature>
<feature type="active site" evidence="1">
    <location>
        <position position="61"/>
    </location>
</feature>
<accession>Q31PQ9</accession>
<reference key="1">
    <citation type="submission" date="2005-08" db="EMBL/GenBank/DDBJ databases">
        <title>Complete sequence of chromosome 1 of Synechococcus elongatus PCC 7942.</title>
        <authorList>
            <consortium name="US DOE Joint Genome Institute"/>
            <person name="Copeland A."/>
            <person name="Lucas S."/>
            <person name="Lapidus A."/>
            <person name="Barry K."/>
            <person name="Detter J.C."/>
            <person name="Glavina T."/>
            <person name="Hammon N."/>
            <person name="Israni S."/>
            <person name="Pitluck S."/>
            <person name="Schmutz J."/>
            <person name="Larimer F."/>
            <person name="Land M."/>
            <person name="Kyrpides N."/>
            <person name="Lykidis A."/>
            <person name="Golden S."/>
            <person name="Richardson P."/>
        </authorList>
    </citation>
    <scope>NUCLEOTIDE SEQUENCE [LARGE SCALE GENOMIC DNA]</scope>
    <source>
        <strain>ATCC 33912 / PCC 7942 / FACHB-805</strain>
    </source>
</reference>
<gene>
    <name evidence="1" type="primary">fabZ</name>
    <name type="ordered locus">Synpcc7942_0930</name>
</gene>
<protein>
    <recommendedName>
        <fullName evidence="1">3-hydroxyacyl-[acyl-carrier-protein] dehydratase FabZ</fullName>
        <ecNumber evidence="1">4.2.1.59</ecNumber>
    </recommendedName>
    <alternativeName>
        <fullName evidence="1">(3R)-hydroxymyristoyl-[acyl-carrier-protein] dehydratase</fullName>
        <shortName evidence="1">(3R)-hydroxymyristoyl-ACP dehydrase</shortName>
    </alternativeName>
    <alternativeName>
        <fullName evidence="1">Beta-hydroxyacyl-ACP dehydratase</fullName>
    </alternativeName>
</protein>
<comment type="function">
    <text evidence="1">Involved in unsaturated fatty acids biosynthesis. Catalyzes the dehydration of short chain beta-hydroxyacyl-ACPs and long chain saturated and unsaturated beta-hydroxyacyl-ACPs.</text>
</comment>
<comment type="catalytic activity">
    <reaction evidence="1">
        <text>a (3R)-hydroxyacyl-[ACP] = a (2E)-enoyl-[ACP] + H2O</text>
        <dbReference type="Rhea" id="RHEA:13097"/>
        <dbReference type="Rhea" id="RHEA-COMP:9925"/>
        <dbReference type="Rhea" id="RHEA-COMP:9945"/>
        <dbReference type="ChEBI" id="CHEBI:15377"/>
        <dbReference type="ChEBI" id="CHEBI:78784"/>
        <dbReference type="ChEBI" id="CHEBI:78827"/>
        <dbReference type="EC" id="4.2.1.59"/>
    </reaction>
</comment>
<comment type="subcellular location">
    <subcellularLocation>
        <location evidence="1">Cytoplasm</location>
    </subcellularLocation>
</comment>
<comment type="similarity">
    <text evidence="1">Belongs to the thioester dehydratase family. FabZ subfamily.</text>
</comment>
<proteinExistence type="inferred from homology"/>
<keyword id="KW-0963">Cytoplasm</keyword>
<keyword id="KW-0441">Lipid A biosynthesis</keyword>
<keyword id="KW-0444">Lipid biosynthesis</keyword>
<keyword id="KW-0443">Lipid metabolism</keyword>
<keyword id="KW-0456">Lyase</keyword>
<keyword id="KW-1185">Reference proteome</keyword>
<dbReference type="EC" id="4.2.1.59" evidence="1"/>
<dbReference type="EMBL" id="CP000100">
    <property type="protein sequence ID" value="ABB56960.1"/>
    <property type="molecule type" value="Genomic_DNA"/>
</dbReference>
<dbReference type="RefSeq" id="WP_011377793.1">
    <property type="nucleotide sequence ID" value="NZ_JACJTX010000003.1"/>
</dbReference>
<dbReference type="SMR" id="Q31PQ9"/>
<dbReference type="STRING" id="1140.Synpcc7942_0930"/>
<dbReference type="PaxDb" id="1140-Synpcc7942_0930"/>
<dbReference type="GeneID" id="72429782"/>
<dbReference type="KEGG" id="syf:Synpcc7942_0930"/>
<dbReference type="eggNOG" id="COG0764">
    <property type="taxonomic scope" value="Bacteria"/>
</dbReference>
<dbReference type="HOGENOM" id="CLU_078912_3_0_3"/>
<dbReference type="OrthoDB" id="9772788at2"/>
<dbReference type="BioCyc" id="SYNEL:SYNPCC7942_0930-MONOMER"/>
<dbReference type="Proteomes" id="UP000889800">
    <property type="component" value="Chromosome"/>
</dbReference>
<dbReference type="GO" id="GO:0005737">
    <property type="term" value="C:cytoplasm"/>
    <property type="evidence" value="ECO:0007669"/>
    <property type="project" value="UniProtKB-SubCell"/>
</dbReference>
<dbReference type="GO" id="GO:0016020">
    <property type="term" value="C:membrane"/>
    <property type="evidence" value="ECO:0007669"/>
    <property type="project" value="GOC"/>
</dbReference>
<dbReference type="GO" id="GO:0019171">
    <property type="term" value="F:(3R)-hydroxyacyl-[acyl-carrier-protein] dehydratase activity"/>
    <property type="evidence" value="ECO:0007669"/>
    <property type="project" value="UniProtKB-EC"/>
</dbReference>
<dbReference type="GO" id="GO:0006633">
    <property type="term" value="P:fatty acid biosynthetic process"/>
    <property type="evidence" value="ECO:0007669"/>
    <property type="project" value="UniProtKB-UniRule"/>
</dbReference>
<dbReference type="GO" id="GO:0009245">
    <property type="term" value="P:lipid A biosynthetic process"/>
    <property type="evidence" value="ECO:0007669"/>
    <property type="project" value="UniProtKB-UniRule"/>
</dbReference>
<dbReference type="CDD" id="cd01288">
    <property type="entry name" value="FabZ"/>
    <property type="match status" value="1"/>
</dbReference>
<dbReference type="FunFam" id="3.10.129.10:FF:000001">
    <property type="entry name" value="3-hydroxyacyl-[acyl-carrier-protein] dehydratase FabZ"/>
    <property type="match status" value="1"/>
</dbReference>
<dbReference type="Gene3D" id="3.10.129.10">
    <property type="entry name" value="Hotdog Thioesterase"/>
    <property type="match status" value="1"/>
</dbReference>
<dbReference type="HAMAP" id="MF_00406">
    <property type="entry name" value="FabZ"/>
    <property type="match status" value="1"/>
</dbReference>
<dbReference type="InterPro" id="IPR013114">
    <property type="entry name" value="FabA_FabZ"/>
</dbReference>
<dbReference type="InterPro" id="IPR010084">
    <property type="entry name" value="FabZ"/>
</dbReference>
<dbReference type="InterPro" id="IPR029069">
    <property type="entry name" value="HotDog_dom_sf"/>
</dbReference>
<dbReference type="NCBIfam" id="TIGR01750">
    <property type="entry name" value="fabZ"/>
    <property type="match status" value="1"/>
</dbReference>
<dbReference type="NCBIfam" id="NF000582">
    <property type="entry name" value="PRK00006.1"/>
    <property type="match status" value="1"/>
</dbReference>
<dbReference type="PANTHER" id="PTHR30272">
    <property type="entry name" value="3-HYDROXYACYL-[ACYL-CARRIER-PROTEIN] DEHYDRATASE"/>
    <property type="match status" value="1"/>
</dbReference>
<dbReference type="PANTHER" id="PTHR30272:SF1">
    <property type="entry name" value="3-HYDROXYACYL-[ACYL-CARRIER-PROTEIN] DEHYDRATASE"/>
    <property type="match status" value="1"/>
</dbReference>
<dbReference type="Pfam" id="PF07977">
    <property type="entry name" value="FabA"/>
    <property type="match status" value="1"/>
</dbReference>
<dbReference type="SUPFAM" id="SSF54637">
    <property type="entry name" value="Thioesterase/thiol ester dehydrase-isomerase"/>
    <property type="match status" value="1"/>
</dbReference>
<organism>
    <name type="scientific">Synechococcus elongatus (strain ATCC 33912 / PCC 7942 / FACHB-805)</name>
    <name type="common">Anacystis nidulans R2</name>
    <dbReference type="NCBI Taxonomy" id="1140"/>
    <lineage>
        <taxon>Bacteria</taxon>
        <taxon>Bacillati</taxon>
        <taxon>Cyanobacteriota</taxon>
        <taxon>Cyanophyceae</taxon>
        <taxon>Synechococcales</taxon>
        <taxon>Synechococcaceae</taxon>
        <taxon>Synechococcus</taxon>
    </lineage>
</organism>
<evidence type="ECO:0000255" key="1">
    <source>
        <dbReference type="HAMAP-Rule" id="MF_00406"/>
    </source>
</evidence>
<sequence>MTVNPDAPALPTLPLAVETIQGLLPHRYPFALVDRIIDYVPGERAVGIKNVTFNEPQFQGHFPGRPLMPGVLIVEAMAQVGGVIVTLMPDMPQGLFVFAGIDQVRFRRPVVPGDQLVLSAQLLSVKRRRFCKIQGEAMVDGQLAASGELLFSLVE</sequence>